<evidence type="ECO:0000255" key="1">
    <source>
        <dbReference type="PROSITE-ProRule" id="PRU00277"/>
    </source>
</evidence>
<evidence type="ECO:0000269" key="2">
    <source>
    </source>
</evidence>
<evidence type="ECO:0000305" key="3"/>
<proteinExistence type="evidence at protein level"/>
<dbReference type="EC" id="5.2.1.8"/>
<dbReference type="EMBL" id="X55743">
    <property type="protein sequence ID" value="CAA39274.1"/>
    <property type="molecule type" value="Genomic_DNA"/>
</dbReference>
<dbReference type="EMBL" id="AL513463">
    <property type="protein sequence ID" value="CAC28766.1"/>
    <property type="molecule type" value="Genomic_DNA"/>
</dbReference>
<dbReference type="EMBL" id="CM002240">
    <property type="protein sequence ID" value="EAA32060.2"/>
    <property type="status" value="ALT_INIT"/>
    <property type="molecule type" value="Genomic_DNA"/>
</dbReference>
<dbReference type="PIR" id="S11090">
    <property type="entry name" value="S11090"/>
</dbReference>
<dbReference type="RefSeq" id="XP_961296.2">
    <property type="nucleotide sequence ID" value="XM_956203.3"/>
</dbReference>
<dbReference type="SMR" id="P20080"/>
<dbReference type="FunCoup" id="P20080">
    <property type="interactions" value="534"/>
</dbReference>
<dbReference type="STRING" id="367110.P20080"/>
<dbReference type="PaxDb" id="5141-EFNCRP00000003914"/>
<dbReference type="EnsemblFungi" id="EAA32060">
    <property type="protein sequence ID" value="EAA32060"/>
    <property type="gene ID" value="NCU04140"/>
</dbReference>
<dbReference type="GeneID" id="3877460"/>
<dbReference type="KEGG" id="ncr:NCU04140"/>
<dbReference type="HOGENOM" id="CLU_013615_8_1_1"/>
<dbReference type="InParanoid" id="P20080"/>
<dbReference type="OrthoDB" id="1902587at2759"/>
<dbReference type="Proteomes" id="UP000001805">
    <property type="component" value="Chromosome 2, Linkage Group V"/>
</dbReference>
<dbReference type="GO" id="GO:0005737">
    <property type="term" value="C:cytoplasm"/>
    <property type="evidence" value="ECO:0007669"/>
    <property type="project" value="UniProtKB-SubCell"/>
</dbReference>
<dbReference type="GO" id="GO:0003755">
    <property type="term" value="F:peptidyl-prolyl cis-trans isomerase activity"/>
    <property type="evidence" value="ECO:0000318"/>
    <property type="project" value="GO_Central"/>
</dbReference>
<dbReference type="GO" id="GO:0061077">
    <property type="term" value="P:chaperone-mediated protein folding"/>
    <property type="evidence" value="ECO:0007669"/>
    <property type="project" value="InterPro"/>
</dbReference>
<dbReference type="FunFam" id="3.10.50.40:FF:000006">
    <property type="entry name" value="Peptidyl-prolyl cis-trans isomerase"/>
    <property type="match status" value="1"/>
</dbReference>
<dbReference type="Gene3D" id="3.10.50.40">
    <property type="match status" value="1"/>
</dbReference>
<dbReference type="InterPro" id="IPR044609">
    <property type="entry name" value="FKBP2/11"/>
</dbReference>
<dbReference type="InterPro" id="IPR046357">
    <property type="entry name" value="PPIase_dom_sf"/>
</dbReference>
<dbReference type="InterPro" id="IPR001179">
    <property type="entry name" value="PPIase_FKBP_dom"/>
</dbReference>
<dbReference type="PANTHER" id="PTHR45779">
    <property type="entry name" value="PEPTIDYLPROLYL ISOMERASE"/>
    <property type="match status" value="1"/>
</dbReference>
<dbReference type="PANTHER" id="PTHR45779:SF7">
    <property type="entry name" value="PEPTIDYLPROLYL ISOMERASE"/>
    <property type="match status" value="1"/>
</dbReference>
<dbReference type="Pfam" id="PF00254">
    <property type="entry name" value="FKBP_C"/>
    <property type="match status" value="1"/>
</dbReference>
<dbReference type="SUPFAM" id="SSF54534">
    <property type="entry name" value="FKBP-like"/>
    <property type="match status" value="1"/>
</dbReference>
<dbReference type="PROSITE" id="PS50059">
    <property type="entry name" value="FKBP_PPIASE"/>
    <property type="match status" value="1"/>
</dbReference>
<accession>P20080</accession>
<accession>Q7S7U2</accession>
<protein>
    <recommendedName>
        <fullName>FK506-binding protein 1A</fullName>
        <shortName>FKBP-1A</shortName>
        <ecNumber>5.2.1.8</ecNumber>
    </recommendedName>
    <alternativeName>
        <fullName>FK506-resistance protein 2</fullName>
    </alternativeName>
    <alternativeName>
        <fullName>NcFKBP13</fullName>
    </alternativeName>
    <alternativeName>
        <fullName>Peptidyl-prolyl cis-trans isomerase fkr-2</fullName>
        <shortName>PPIase fkr-2</shortName>
    </alternativeName>
</protein>
<feature type="initiator methionine" description="Removed" evidence="2">
    <location>
        <position position="1"/>
    </location>
</feature>
<feature type="chain" id="PRO_0000075303" description="FK506-binding protein 1A">
    <location>
        <begin position="2"/>
        <end position="120"/>
    </location>
</feature>
<feature type="domain" description="PPIase FKBP-type" evidence="1">
    <location>
        <begin position="26"/>
        <end position="114"/>
    </location>
</feature>
<gene>
    <name type="primary">fkr-2</name>
    <name type="ORF">9G6.180</name>
    <name type="ORF">NCU04140</name>
</gene>
<organism>
    <name type="scientific">Neurospora crassa (strain ATCC 24698 / 74-OR23-1A / CBS 708.71 / DSM 1257 / FGSC 987)</name>
    <dbReference type="NCBI Taxonomy" id="367110"/>
    <lineage>
        <taxon>Eukaryota</taxon>
        <taxon>Fungi</taxon>
        <taxon>Dikarya</taxon>
        <taxon>Ascomycota</taxon>
        <taxon>Pezizomycotina</taxon>
        <taxon>Sordariomycetes</taxon>
        <taxon>Sordariomycetidae</taxon>
        <taxon>Sordariales</taxon>
        <taxon>Sordariaceae</taxon>
        <taxon>Neurospora</taxon>
    </lineage>
</organism>
<name>FKB1A_NEUCR</name>
<keyword id="KW-0963">Cytoplasm</keyword>
<keyword id="KW-0903">Direct protein sequencing</keyword>
<keyword id="KW-0413">Isomerase</keyword>
<keyword id="KW-1185">Reference proteome</keyword>
<keyword id="KW-0697">Rotamase</keyword>
<reference key="1">
    <citation type="journal article" date="1990" name="Nature">
        <title>Isolation and sequence of an FK506-binding protein from N. crassa which catalyses protein folding.</title>
        <authorList>
            <person name="Tropschug M."/>
            <person name="Wachter E."/>
            <person name="Mayer S."/>
            <person name="Schoenbrunner E.R."/>
            <person name="Schmid F.X."/>
        </authorList>
    </citation>
    <scope>NUCLEOTIDE SEQUENCE [GENOMIC DNA]</scope>
</reference>
<reference key="2">
    <citation type="journal article" date="2003" name="Nucleic Acids Res.">
        <title>What's in the genome of a filamentous fungus? Analysis of the Neurospora genome sequence.</title>
        <authorList>
            <person name="Mannhaupt G."/>
            <person name="Montrone C."/>
            <person name="Haase D."/>
            <person name="Mewes H.-W."/>
            <person name="Aign V."/>
            <person name="Hoheisel J.D."/>
            <person name="Fartmann B."/>
            <person name="Nyakatura G."/>
            <person name="Kempken F."/>
            <person name="Maier J."/>
            <person name="Schulte U."/>
        </authorList>
    </citation>
    <scope>NUCLEOTIDE SEQUENCE [LARGE SCALE GENOMIC DNA]</scope>
    <source>
        <strain>ATCC 24698 / 74-OR23-1A / CBS 708.71 / DSM 1257 / FGSC 987</strain>
    </source>
</reference>
<reference key="3">
    <citation type="journal article" date="2003" name="Nature">
        <title>The genome sequence of the filamentous fungus Neurospora crassa.</title>
        <authorList>
            <person name="Galagan J.E."/>
            <person name="Calvo S.E."/>
            <person name="Borkovich K.A."/>
            <person name="Selker E.U."/>
            <person name="Read N.D."/>
            <person name="Jaffe D.B."/>
            <person name="FitzHugh W."/>
            <person name="Ma L.-J."/>
            <person name="Smirnov S."/>
            <person name="Purcell S."/>
            <person name="Rehman B."/>
            <person name="Elkins T."/>
            <person name="Engels R."/>
            <person name="Wang S."/>
            <person name="Nielsen C.B."/>
            <person name="Butler J."/>
            <person name="Endrizzi M."/>
            <person name="Qui D."/>
            <person name="Ianakiev P."/>
            <person name="Bell-Pedersen D."/>
            <person name="Nelson M.A."/>
            <person name="Werner-Washburne M."/>
            <person name="Selitrennikoff C.P."/>
            <person name="Kinsey J.A."/>
            <person name="Braun E.L."/>
            <person name="Zelter A."/>
            <person name="Schulte U."/>
            <person name="Kothe G.O."/>
            <person name="Jedd G."/>
            <person name="Mewes H.-W."/>
            <person name="Staben C."/>
            <person name="Marcotte E."/>
            <person name="Greenberg D."/>
            <person name="Roy A."/>
            <person name="Foley K."/>
            <person name="Naylor J."/>
            <person name="Stange-Thomann N."/>
            <person name="Barrett R."/>
            <person name="Gnerre S."/>
            <person name="Kamal M."/>
            <person name="Kamvysselis M."/>
            <person name="Mauceli E.W."/>
            <person name="Bielke C."/>
            <person name="Rudd S."/>
            <person name="Frishman D."/>
            <person name="Krystofova S."/>
            <person name="Rasmussen C."/>
            <person name="Metzenberg R.L."/>
            <person name="Perkins D.D."/>
            <person name="Kroken S."/>
            <person name="Cogoni C."/>
            <person name="Macino G."/>
            <person name="Catcheside D.E.A."/>
            <person name="Li W."/>
            <person name="Pratt R.J."/>
            <person name="Osmani S.A."/>
            <person name="DeSouza C.P.C."/>
            <person name="Glass N.L."/>
            <person name="Orbach M.J."/>
            <person name="Berglund J.A."/>
            <person name="Voelker R."/>
            <person name="Yarden O."/>
            <person name="Plamann M."/>
            <person name="Seiler S."/>
            <person name="Dunlap J.C."/>
            <person name="Radford A."/>
            <person name="Aramayo R."/>
            <person name="Natvig D.O."/>
            <person name="Alex L.A."/>
            <person name="Mannhaupt G."/>
            <person name="Ebbole D.J."/>
            <person name="Freitag M."/>
            <person name="Paulsen I."/>
            <person name="Sachs M.S."/>
            <person name="Lander E.S."/>
            <person name="Nusbaum C."/>
            <person name="Birren B.W."/>
        </authorList>
    </citation>
    <scope>NUCLEOTIDE SEQUENCE [LARGE SCALE GENOMIC DNA]</scope>
    <source>
        <strain>ATCC 24698 / 74-OR23-1A / CBS 708.71 / DSM 1257 / FGSC 987</strain>
    </source>
</reference>
<reference key="4">
    <citation type="journal article" date="2000" name="FEBS Lett.">
        <title>A novel type of FKBP in the secretory pathway of Neurospora crassa.</title>
        <authorList>
            <person name="Solscheid B."/>
            <person name="Tropschug M."/>
        </authorList>
    </citation>
    <scope>PROTEIN SEQUENCE OF 2-39</scope>
    <source>
        <strain>ATCC 24698 / 74-OR23-1A / CBS 708.71 / DSM 1257 / FGSC 987</strain>
    </source>
</reference>
<comment type="function">
    <text>PPIases accelerate the folding of proteins. It catalyzes the cis-trans isomerization of proline imidic peptide bonds in oligopeptides.</text>
</comment>
<comment type="catalytic activity">
    <reaction>
        <text>[protein]-peptidylproline (omega=180) = [protein]-peptidylproline (omega=0)</text>
        <dbReference type="Rhea" id="RHEA:16237"/>
        <dbReference type="Rhea" id="RHEA-COMP:10747"/>
        <dbReference type="Rhea" id="RHEA-COMP:10748"/>
        <dbReference type="ChEBI" id="CHEBI:83833"/>
        <dbReference type="ChEBI" id="CHEBI:83834"/>
        <dbReference type="EC" id="5.2.1.8"/>
    </reaction>
</comment>
<comment type="subcellular location">
    <subcellularLocation>
        <location>Cytoplasm</location>
    </subcellularLocation>
</comment>
<comment type="miscellaneous">
    <text>Binds to the immunosuppressant drug FK506.</text>
</comment>
<comment type="similarity">
    <text evidence="3">Belongs to the FKBP-type PPIase family. FKBP1 subfamily.</text>
</comment>
<comment type="sequence caution" evidence="3">
    <conflict type="erroneous initiation">
        <sequence resource="EMBL-CDS" id="EAA32060"/>
    </conflict>
</comment>
<sequence length="120" mass="13037">MTIPQLDGLQIEVQQEGQGTRETRRGDNVDVHYKGVLTSGKKFDASYDRGEPLNFTVGQGQVIKGWDEGLLGMKIGEKRKLTIAPHLAYGNRAVGGIIPANSTLIFETELVGIKGVQKGE</sequence>